<proteinExistence type="evidence at transcript level"/>
<feature type="chain" id="PRO_0000234364" description="Myb-related protein MYBAS2">
    <location>
        <begin position="1"/>
        <end position="242"/>
    </location>
</feature>
<feature type="domain" description="HTH myb-type 1" evidence="2">
    <location>
        <begin position="5"/>
        <end position="61"/>
    </location>
</feature>
<feature type="domain" description="HTH myb-type 2" evidence="2">
    <location>
        <begin position="62"/>
        <end position="112"/>
    </location>
</feature>
<feature type="DNA-binding region" description="H-T-H motif" evidence="2">
    <location>
        <begin position="33"/>
        <end position="57"/>
    </location>
</feature>
<feature type="DNA-binding region" description="H-T-H motif" evidence="2">
    <location>
        <begin position="85"/>
        <end position="108"/>
    </location>
</feature>
<feature type="region of interest" description="Disordered" evidence="3">
    <location>
        <begin position="110"/>
        <end position="133"/>
    </location>
</feature>
<feature type="short sequence motif" description="Bipartite nuclear localization signal 1" evidence="1">
    <location>
        <begin position="62"/>
        <end position="65"/>
    </location>
</feature>
<feature type="short sequence motif" description="Bipartite nuclear localization signal 2" evidence="1">
    <location>
        <begin position="109"/>
        <end position="117"/>
    </location>
</feature>
<feature type="compositionally biased region" description="Low complexity" evidence="3">
    <location>
        <begin position="118"/>
        <end position="133"/>
    </location>
</feature>
<feature type="splice variant" id="VSP_018295" description="In isoform MYBAS2-1." evidence="4">
    <location>
        <begin position="1"/>
        <end position="65"/>
    </location>
</feature>
<feature type="sequence conflict" description="In Ref. 2; CAD44611." evidence="5" ref="2">
    <original>I</original>
    <variation>M</variation>
    <location>
        <position position="8"/>
    </location>
</feature>
<feature type="sequence conflict" description="In Ref. 7; AK107214." evidence="5" ref="7">
    <original>K</original>
    <variation>E</variation>
    <location>
        <position position="194"/>
    </location>
</feature>
<dbReference type="EMBL" id="DQ075261">
    <property type="protein sequence ID" value="AAY97902.1"/>
    <property type="molecule type" value="mRNA"/>
</dbReference>
<dbReference type="EMBL" id="DQ075262">
    <property type="protein sequence ID" value="AAY97903.1"/>
    <property type="molecule type" value="mRNA"/>
</dbReference>
<dbReference type="EMBL" id="DQ075263">
    <property type="protein sequence ID" value="AAY97904.2"/>
    <property type="molecule type" value="mRNA"/>
</dbReference>
<dbReference type="EMBL" id="AJ495785">
    <property type="protein sequence ID" value="CAD44611.1"/>
    <property type="molecule type" value="mRNA"/>
</dbReference>
<dbReference type="EMBL" id="DP000011">
    <property type="protein sequence ID" value="ABA99595.2"/>
    <property type="molecule type" value="Genomic_DNA"/>
</dbReference>
<dbReference type="EMBL" id="AP008218">
    <property type="protein sequence ID" value="BAF30080.2"/>
    <property type="molecule type" value="Genomic_DNA"/>
</dbReference>
<dbReference type="EMBL" id="AP014968">
    <property type="protein sequence ID" value="BAT17706.1"/>
    <property type="molecule type" value="Genomic_DNA"/>
</dbReference>
<dbReference type="EMBL" id="AK107214">
    <property type="status" value="NOT_ANNOTATED_CDS"/>
    <property type="molecule type" value="mRNA"/>
</dbReference>
<dbReference type="RefSeq" id="XP_015620226.1">
    <property type="nucleotide sequence ID" value="XM_015764740.1"/>
</dbReference>
<dbReference type="RefSeq" id="XP_015620227.1">
    <property type="nucleotide sequence ID" value="XM_015764741.1"/>
</dbReference>
<dbReference type="RefSeq" id="XP_015620229.1">
    <property type="nucleotide sequence ID" value="XM_015764743.1"/>
</dbReference>
<dbReference type="SMR" id="Q4JL76"/>
<dbReference type="FunCoup" id="Q4JL76">
    <property type="interactions" value="17"/>
</dbReference>
<dbReference type="STRING" id="39947.Q4JL76"/>
<dbReference type="PaxDb" id="39947-Q4JL76"/>
<dbReference type="EnsemblPlants" id="Os12t0567300-00">
    <molecule id="Q4JL76-1"/>
    <property type="protein sequence ID" value="Os12t0567300-00"/>
    <property type="gene ID" value="Os12g0567300"/>
</dbReference>
<dbReference type="Gramene" id="Os12t0567300-00">
    <molecule id="Q4JL76-1"/>
    <property type="protein sequence ID" value="Os12t0567300-00"/>
    <property type="gene ID" value="Os12g0567300"/>
</dbReference>
<dbReference type="KEGG" id="dosa:Os12g0567300"/>
<dbReference type="eggNOG" id="KOG0048">
    <property type="taxonomic scope" value="Eukaryota"/>
</dbReference>
<dbReference type="HOGENOM" id="CLU_028567_25_0_1"/>
<dbReference type="InParanoid" id="Q4JL76"/>
<dbReference type="OMA" id="RMTAHEE"/>
<dbReference type="Proteomes" id="UP000000763">
    <property type="component" value="Chromosome 12"/>
</dbReference>
<dbReference type="Proteomes" id="UP000059680">
    <property type="component" value="Chromosome 12"/>
</dbReference>
<dbReference type="GO" id="GO:0005634">
    <property type="term" value="C:nucleus"/>
    <property type="evidence" value="ECO:0000318"/>
    <property type="project" value="GO_Central"/>
</dbReference>
<dbReference type="GO" id="GO:0003700">
    <property type="term" value="F:DNA-binding transcription factor activity"/>
    <property type="evidence" value="ECO:0007669"/>
    <property type="project" value="InterPro"/>
</dbReference>
<dbReference type="GO" id="GO:0043565">
    <property type="term" value="F:sequence-specific DNA binding"/>
    <property type="evidence" value="ECO:0000318"/>
    <property type="project" value="GO_Central"/>
</dbReference>
<dbReference type="GO" id="GO:0006355">
    <property type="term" value="P:regulation of DNA-templated transcription"/>
    <property type="evidence" value="ECO:0000318"/>
    <property type="project" value="GO_Central"/>
</dbReference>
<dbReference type="CDD" id="cd00167">
    <property type="entry name" value="SANT"/>
    <property type="match status" value="2"/>
</dbReference>
<dbReference type="FunFam" id="1.10.10.60:FF:000259">
    <property type="entry name" value="MYB transcription factor"/>
    <property type="match status" value="1"/>
</dbReference>
<dbReference type="FunFam" id="1.10.10.60:FF:000011">
    <property type="entry name" value="Myb transcription factor"/>
    <property type="match status" value="1"/>
</dbReference>
<dbReference type="Gene3D" id="1.10.10.60">
    <property type="entry name" value="Homeodomain-like"/>
    <property type="match status" value="2"/>
</dbReference>
<dbReference type="InterPro" id="IPR044676">
    <property type="entry name" value="EOBI/EOBII-like_plant"/>
</dbReference>
<dbReference type="InterPro" id="IPR009057">
    <property type="entry name" value="Homeodomain-like_sf"/>
</dbReference>
<dbReference type="InterPro" id="IPR017930">
    <property type="entry name" value="Myb_dom"/>
</dbReference>
<dbReference type="InterPro" id="IPR001005">
    <property type="entry name" value="SANT/Myb"/>
</dbReference>
<dbReference type="PANTHER" id="PTHR45675">
    <property type="entry name" value="MYB TRANSCRIPTION FACTOR-RELATED-RELATED"/>
    <property type="match status" value="1"/>
</dbReference>
<dbReference type="PANTHER" id="PTHR45675:SF106">
    <property type="entry name" value="MYB-RELATED PROTEIN MYBAS2"/>
    <property type="match status" value="1"/>
</dbReference>
<dbReference type="Pfam" id="PF00249">
    <property type="entry name" value="Myb_DNA-binding"/>
    <property type="match status" value="2"/>
</dbReference>
<dbReference type="SMART" id="SM00717">
    <property type="entry name" value="SANT"/>
    <property type="match status" value="2"/>
</dbReference>
<dbReference type="SUPFAM" id="SSF46689">
    <property type="entry name" value="Homeodomain-like"/>
    <property type="match status" value="1"/>
</dbReference>
<dbReference type="PROSITE" id="PS51294">
    <property type="entry name" value="HTH_MYB"/>
    <property type="match status" value="2"/>
</dbReference>
<comment type="function">
    <text evidence="5">Transcription factor.</text>
</comment>
<comment type="subcellular location">
    <subcellularLocation>
        <location evidence="2">Nucleus</location>
    </subcellularLocation>
</comment>
<comment type="alternative products">
    <event type="alternative splicing"/>
    <isoform>
        <id>Q4JL76-1</id>
        <name>MYBAS2-3</name>
        <sequence type="displayed"/>
    </isoform>
    <isoform>
        <id>Q4JL76-2</id>
        <name>MYBAS2-1</name>
        <name>MYBAS2-2</name>
        <sequence type="described" ref="VSP_018295"/>
    </isoform>
</comment>
<reference key="1">
    <citation type="journal article" date="2006" name="J. Exp. Bot.">
        <title>A subgroup of MYB transcription factor genes undergoes highly conserved alternative splicing in Arabidopsis and rice.</title>
        <authorList>
            <person name="Li J."/>
            <person name="Li X."/>
            <person name="Guo L."/>
            <person name="Lu F."/>
            <person name="Feng X."/>
            <person name="He K."/>
            <person name="Wei L."/>
            <person name="Chen Z."/>
            <person name="Qu L.-J."/>
            <person name="Gu H."/>
        </authorList>
    </citation>
    <scope>NUCLEOTIDE SEQUENCE [MRNA] (ISOFORMS MYBAS2-1 AND MYBAS2-3)</scope>
    <scope>ALTERNATIVE SPLICING</scope>
    <source>
        <strain>cv. Nipponbare</strain>
    </source>
</reference>
<reference key="2">
    <citation type="submission" date="2002-07" db="EMBL/GenBank/DDBJ databases">
        <title>Isolation of myb genes from Oryza sativa.</title>
        <authorList>
            <person name="Xu S."/>
            <person name="Xu Z."/>
            <person name="Xue H."/>
        </authorList>
    </citation>
    <scope>NUCLEOTIDE SEQUENCE [MRNA] (ISOFORM MYBAS2-3)</scope>
    <source>
        <strain>cv. Nipponbare</strain>
    </source>
</reference>
<reference key="3">
    <citation type="journal article" date="2005" name="BMC Biol.">
        <title>The sequence of rice chromosomes 11 and 12, rich in disease resistance genes and recent gene duplications.</title>
        <authorList>
            <consortium name="The rice chromosomes 11 and 12 sequencing consortia"/>
        </authorList>
    </citation>
    <scope>NUCLEOTIDE SEQUENCE [LARGE SCALE GENOMIC DNA]</scope>
    <source>
        <strain>cv. Nipponbare</strain>
    </source>
</reference>
<reference key="4">
    <citation type="journal article" date="2005" name="Nature">
        <title>The map-based sequence of the rice genome.</title>
        <authorList>
            <consortium name="International rice genome sequencing project (IRGSP)"/>
        </authorList>
    </citation>
    <scope>NUCLEOTIDE SEQUENCE [LARGE SCALE GENOMIC DNA]</scope>
    <source>
        <strain>cv. Nipponbare</strain>
    </source>
</reference>
<reference key="5">
    <citation type="journal article" date="2008" name="Nucleic Acids Res.">
        <title>The rice annotation project database (RAP-DB): 2008 update.</title>
        <authorList>
            <consortium name="The rice annotation project (RAP)"/>
        </authorList>
    </citation>
    <scope>GENOME REANNOTATION</scope>
    <source>
        <strain>cv. Nipponbare</strain>
    </source>
</reference>
<reference key="6">
    <citation type="journal article" date="2013" name="Rice">
        <title>Improvement of the Oryza sativa Nipponbare reference genome using next generation sequence and optical map data.</title>
        <authorList>
            <person name="Kawahara Y."/>
            <person name="de la Bastide M."/>
            <person name="Hamilton J.P."/>
            <person name="Kanamori H."/>
            <person name="McCombie W.R."/>
            <person name="Ouyang S."/>
            <person name="Schwartz D.C."/>
            <person name="Tanaka T."/>
            <person name="Wu J."/>
            <person name="Zhou S."/>
            <person name="Childs K.L."/>
            <person name="Davidson R.M."/>
            <person name="Lin H."/>
            <person name="Quesada-Ocampo L."/>
            <person name="Vaillancourt B."/>
            <person name="Sakai H."/>
            <person name="Lee S.S."/>
            <person name="Kim J."/>
            <person name="Numa H."/>
            <person name="Itoh T."/>
            <person name="Buell C.R."/>
            <person name="Matsumoto T."/>
        </authorList>
    </citation>
    <scope>GENOME REANNOTATION</scope>
    <source>
        <strain>cv. Nipponbare</strain>
    </source>
</reference>
<reference key="7">
    <citation type="journal article" date="2003" name="Science">
        <title>Collection, mapping, and annotation of over 28,000 cDNA clones from japonica rice.</title>
        <authorList>
            <consortium name="The rice full-length cDNA consortium"/>
        </authorList>
    </citation>
    <scope>NUCLEOTIDE SEQUENCE [LARGE SCALE MRNA] (ISOFORM MYBAS2-3)</scope>
    <source>
        <strain>cv. Nipponbare</strain>
    </source>
</reference>
<protein>
    <recommendedName>
        <fullName>Myb-related protein MYBAS2</fullName>
    </recommendedName>
</protein>
<name>MYBA2_ORYSJ</name>
<organism>
    <name type="scientific">Oryza sativa subsp. japonica</name>
    <name type="common">Rice</name>
    <dbReference type="NCBI Taxonomy" id="39947"/>
    <lineage>
        <taxon>Eukaryota</taxon>
        <taxon>Viridiplantae</taxon>
        <taxon>Streptophyta</taxon>
        <taxon>Embryophyta</taxon>
        <taxon>Tracheophyta</taxon>
        <taxon>Spermatophyta</taxon>
        <taxon>Magnoliopsida</taxon>
        <taxon>Liliopsida</taxon>
        <taxon>Poales</taxon>
        <taxon>Poaceae</taxon>
        <taxon>BOP clade</taxon>
        <taxon>Oryzoideae</taxon>
        <taxon>Oryzeae</taxon>
        <taxon>Oryzinae</taxon>
        <taxon>Oryza</taxon>
        <taxon>Oryza sativa</taxon>
    </lineage>
</organism>
<keyword id="KW-0025">Alternative splicing</keyword>
<keyword id="KW-0238">DNA-binding</keyword>
<keyword id="KW-0539">Nucleus</keyword>
<keyword id="KW-1185">Reference proteome</keyword>
<keyword id="KW-0677">Repeat</keyword>
<keyword id="KW-0804">Transcription</keyword>
<keyword id="KW-0805">Transcription regulation</keyword>
<evidence type="ECO:0000255" key="1"/>
<evidence type="ECO:0000255" key="2">
    <source>
        <dbReference type="PROSITE-ProRule" id="PRU00625"/>
    </source>
</evidence>
<evidence type="ECO:0000256" key="3">
    <source>
        <dbReference type="SAM" id="MobiDB-lite"/>
    </source>
</evidence>
<evidence type="ECO:0000303" key="4">
    <source>
    </source>
</evidence>
<evidence type="ECO:0000305" key="5"/>
<sequence>MVTVREEIRKGPWTEQEDLQLVCTVRLFGERRWDFIAKVSGLNRTGKSCRLRWVNYLHPGLKRGRMSPHEERLILELHARWGNRWSRIARRLPGRTDNEIKNYWRTHMRKKAQERKSNMSPSSSSSSLTYQSCHPETPSMIIGIEEQELHGGSGCITSIMKSTPVDMDGYPMDQIWMEIEAPNVLPGPCFDEAKDSASNSLSGPLLPYPMWDYYCPETCLRMDDEIKVAPQFGYGKGVGPCY</sequence>
<gene>
    <name type="primary">MYBAS2</name>
    <name type="synonym">MYB17</name>
    <name type="ordered locus">Os12g0567300</name>
    <name type="ordered locus">LOC_Os12g37970</name>
</gene>
<accession>Q4JL76</accession>
<accession>Q0IMI5</accession>
<accession>Q2QNF6</accession>
<accession>Q4JL77</accession>
<accession>Q5NKI2</accession>